<evidence type="ECO:0000250" key="1"/>
<evidence type="ECO:0000255" key="2"/>
<evidence type="ECO:0000305" key="3"/>
<dbReference type="EMBL" id="BC066119">
    <property type="protein sequence ID" value="AAH66119.1"/>
    <property type="molecule type" value="mRNA"/>
</dbReference>
<dbReference type="RefSeq" id="NP_001084444.1">
    <property type="nucleotide sequence ID" value="NM_001090975.1"/>
</dbReference>
<dbReference type="SMR" id="Q6NZI6"/>
<dbReference type="DNASU" id="403390"/>
<dbReference type="GeneID" id="403390"/>
<dbReference type="KEGG" id="xla:403390"/>
<dbReference type="AGR" id="Xenbase:XB-GENE-962830"/>
<dbReference type="CTD" id="403390"/>
<dbReference type="Xenbase" id="XB-GENE-962830">
    <property type="gene designation" value="orai1.S"/>
</dbReference>
<dbReference type="OMA" id="KCARRVK"/>
<dbReference type="OrthoDB" id="61124at2759"/>
<dbReference type="Proteomes" id="UP000186698">
    <property type="component" value="Chromosome 2S"/>
</dbReference>
<dbReference type="Bgee" id="403390">
    <property type="expression patterns" value="Expressed in testis and 12 other cell types or tissues"/>
</dbReference>
<dbReference type="GO" id="GO:0016020">
    <property type="term" value="C:membrane"/>
    <property type="evidence" value="ECO:0000318"/>
    <property type="project" value="GO_Central"/>
</dbReference>
<dbReference type="GO" id="GO:0015279">
    <property type="term" value="F:store-operated calcium channel activity"/>
    <property type="evidence" value="ECO:0000318"/>
    <property type="project" value="GO_Central"/>
</dbReference>
<dbReference type="GO" id="GO:0002115">
    <property type="term" value="P:store-operated calcium entry"/>
    <property type="evidence" value="ECO:0000318"/>
    <property type="project" value="GO_Central"/>
</dbReference>
<dbReference type="FunFam" id="1.20.140.140:FF:000001">
    <property type="entry name" value="Calcium release-activated calcium modulator 1"/>
    <property type="match status" value="1"/>
</dbReference>
<dbReference type="Gene3D" id="1.20.140.140">
    <property type="entry name" value="Calcium release-activated calcium channel protein Orai"/>
    <property type="match status" value="1"/>
</dbReference>
<dbReference type="InterPro" id="IPR012446">
    <property type="entry name" value="CRAC_channel"/>
</dbReference>
<dbReference type="InterPro" id="IPR038350">
    <property type="entry name" value="Orai_sf"/>
</dbReference>
<dbReference type="PANTHER" id="PTHR31501">
    <property type="entry name" value="CALCIUM RELEASE-ACTIVATED CALCIUM CHANNEL PROTEIN 1"/>
    <property type="match status" value="1"/>
</dbReference>
<dbReference type="PANTHER" id="PTHR31501:SF5">
    <property type="entry name" value="PROTEIN ORAI-2"/>
    <property type="match status" value="1"/>
</dbReference>
<dbReference type="Pfam" id="PF07856">
    <property type="entry name" value="Orai-1"/>
    <property type="match status" value="1"/>
</dbReference>
<reference key="1">
    <citation type="submission" date="2004-02" db="EMBL/GenBank/DDBJ databases">
        <authorList>
            <consortium name="NIH - Xenopus Gene Collection (XGC) project"/>
        </authorList>
    </citation>
    <scope>NUCLEOTIDE SEQUENCE [LARGE SCALE MRNA]</scope>
    <source>
        <tissue>Lung</tissue>
    </source>
</reference>
<keyword id="KW-0472">Membrane</keyword>
<keyword id="KW-1185">Reference proteome</keyword>
<keyword id="KW-0812">Transmembrane</keyword>
<keyword id="KW-1133">Transmembrane helix</keyword>
<comment type="function">
    <text evidence="1">Ca(2+) release-activated Ca(2+)-like (CRAC-like) channel subunit which mediates Ca(2+) influx and increase in Ca(2+)-selective current by synergy with the Ca(2+) sensor, stim1.</text>
</comment>
<comment type="subcellular location">
    <subcellularLocation>
        <location evidence="1">Membrane</location>
        <topology evidence="1">Multi-pass membrane protein</topology>
    </subcellularLocation>
</comment>
<comment type="similarity">
    <text evidence="3">Belongs to the Orai family.</text>
</comment>
<accession>Q6NZI6</accession>
<sequence>MSSELNIPVDPSTPAVSERGNKGMDYRDWVRRSYLELVTSNHHSVQALSWRKLYLSRAKLKASSRTSALLSGFAMVAMVEVQLEMKYGYPQLLLIAFSACTTVLVAVHLFALLISTCILPNVEAVSNIHNLNSVNESPHDRMHPYIELAWGFSTALGILLFLAEVVLLCWIKFLPIDSALTRNETATTQKPRGNAGWNSALVSTIIMVPVGIIFVIFTIHFYRTLVRHKTERHHQEIEELHKLKVQLDGHDRGINVV</sequence>
<protein>
    <recommendedName>
        <fullName>Protein orai-2</fullName>
    </recommendedName>
    <alternativeName>
        <fullName>Transmembrane protein 142B</fullName>
    </alternativeName>
</protein>
<proteinExistence type="evidence at transcript level"/>
<gene>
    <name type="primary">orai2</name>
    <name type="synonym">tmem142b</name>
</gene>
<name>ORAI2_XENLA</name>
<organism>
    <name type="scientific">Xenopus laevis</name>
    <name type="common">African clawed frog</name>
    <dbReference type="NCBI Taxonomy" id="8355"/>
    <lineage>
        <taxon>Eukaryota</taxon>
        <taxon>Metazoa</taxon>
        <taxon>Chordata</taxon>
        <taxon>Craniata</taxon>
        <taxon>Vertebrata</taxon>
        <taxon>Euteleostomi</taxon>
        <taxon>Amphibia</taxon>
        <taxon>Batrachia</taxon>
        <taxon>Anura</taxon>
        <taxon>Pipoidea</taxon>
        <taxon>Pipidae</taxon>
        <taxon>Xenopodinae</taxon>
        <taxon>Xenopus</taxon>
        <taxon>Xenopus</taxon>
    </lineage>
</organism>
<feature type="chain" id="PRO_0000234394" description="Protein orai-2">
    <location>
        <begin position="1"/>
        <end position="257"/>
    </location>
</feature>
<feature type="transmembrane region" description="Helical" evidence="2">
    <location>
        <begin position="62"/>
        <end position="79"/>
    </location>
</feature>
<feature type="transmembrane region" description="Helical" evidence="2">
    <location>
        <begin position="94"/>
        <end position="114"/>
    </location>
</feature>
<feature type="transmembrane region" description="Helical" evidence="2">
    <location>
        <begin position="156"/>
        <end position="176"/>
    </location>
</feature>
<feature type="transmembrane region" description="Helical" evidence="2">
    <location>
        <begin position="201"/>
        <end position="221"/>
    </location>
</feature>